<sequence>MGVLKFKHIFFRSFVKSSGVSQIVFTFLLIPCCLTLNFRAPPIIPNVPFLWAWNAPSEFCLGKFNEPLDMSLFTLMGSPRINVTGQGVTIFYVDRLGYYPYIDLTTGVTVHGGIPQKVSLQDHLDKSKQDILFYMPVDNLGMAVIDWEEWRPTWARNWKPKDVYKNRSIELVQQQNVQLSLPQATDKAKQEFEKAGKDFMLETIKLGRSLRPNHLWGYYLFPDCYNHHYRKPGYNGSCFDVEIKRNDDLSWLWNESTALYPSIYLNTQQSVVVATLYVRNRVREAIRVSKIPDAKNPLPVFVYARLVFTDQVLKFLSREELVSTLGETVALGASGIVIWGSLSITRSMKSCLLLDTYMETILNPYIINVTLAAKMCSQVLCQEQGVCIRKDWNSSDYLHLNPDNFDIRLEKGGKFTVHGKPTVEDLEEFSEKFYCSCYTNLSCKEKADVKDTDAVDVCIADGVCIDASLKPPVETEGSPPIFYNTSSSTVSTTMFIVNILFLIISSVASL</sequence>
<protein>
    <recommendedName>
        <fullName>Hyaluronidase PH-20</fullName>
        <shortName>Hyal-PH20</shortName>
        <ecNumber>3.2.1.35</ecNumber>
    </recommendedName>
    <alternativeName>
        <fullName>Hyaluronoglucosaminidase PH-20</fullName>
    </alternativeName>
    <alternativeName>
        <fullName>Sperm adhesion molecule 1</fullName>
    </alternativeName>
    <alternativeName>
        <fullName>Sperm surface protein PH-20</fullName>
    </alternativeName>
</protein>
<name>HYALP_MACFA</name>
<keyword id="KW-0025">Alternative splicing</keyword>
<keyword id="KW-0130">Cell adhesion</keyword>
<keyword id="KW-1003">Cell membrane</keyword>
<keyword id="KW-1015">Disulfide bond</keyword>
<keyword id="KW-0325">Glycoprotein</keyword>
<keyword id="KW-0326">Glycosidase</keyword>
<keyword id="KW-0336">GPI-anchor</keyword>
<keyword id="KW-0378">Hydrolase</keyword>
<keyword id="KW-0449">Lipoprotein</keyword>
<keyword id="KW-0472">Membrane</keyword>
<keyword id="KW-1185">Reference proteome</keyword>
<keyword id="KW-0732">Signal</keyword>
<feature type="signal peptide" evidence="1">
    <location>
        <begin position="1"/>
        <end position="35"/>
    </location>
</feature>
<feature type="chain" id="PRO_0000012091" description="Hyaluronidase PH-20">
    <location>
        <begin position="36"/>
        <end position="491"/>
    </location>
</feature>
<feature type="propeptide" id="PRO_0000012092" description="Removed in mature form" evidence="2">
    <location>
        <begin position="492"/>
        <end position="510"/>
    </location>
</feature>
<feature type="active site" description="Proton donor" evidence="1">
    <location>
        <position position="148"/>
    </location>
</feature>
<feature type="lipid moiety-binding region" description="GPI-anchor amidated serine" evidence="2">
    <location>
        <position position="491"/>
    </location>
</feature>
<feature type="glycosylation site" description="N-linked (GlcNAc...) asparagine" evidence="2">
    <location>
        <position position="82"/>
    </location>
</feature>
<feature type="glycosylation site" description="N-linked (GlcNAc...) asparagine" evidence="2">
    <location>
        <position position="166"/>
    </location>
</feature>
<feature type="glycosylation site" description="N-linked (GlcNAc...) asparagine" evidence="2">
    <location>
        <position position="235"/>
    </location>
</feature>
<feature type="glycosylation site" description="N-linked (GlcNAc...) asparagine" evidence="2">
    <location>
        <position position="254"/>
    </location>
</feature>
<feature type="glycosylation site" description="N-linked (GlcNAc...) asparagine" evidence="2">
    <location>
        <position position="368"/>
    </location>
</feature>
<feature type="glycosylation site" description="N-linked (GlcNAc...) asparagine" evidence="2">
    <location>
        <position position="393"/>
    </location>
</feature>
<feature type="glycosylation site" description="N-linked (GlcNAc...) asparagine" evidence="2">
    <location>
        <position position="440"/>
    </location>
</feature>
<feature type="glycosylation site" description="N-linked (GlcNAc...) asparagine" evidence="2">
    <location>
        <position position="484"/>
    </location>
</feature>
<feature type="disulfide bond" evidence="1">
    <location>
        <begin position="60"/>
        <end position="351"/>
    </location>
</feature>
<feature type="disulfide bond" evidence="1">
    <location>
        <begin position="224"/>
        <end position="238"/>
    </location>
</feature>
<feature type="disulfide bond" evidence="1">
    <location>
        <begin position="376"/>
        <end position="387"/>
    </location>
</feature>
<feature type="disulfide bond" evidence="1">
    <location>
        <begin position="381"/>
        <end position="435"/>
    </location>
</feature>
<feature type="disulfide bond" evidence="1">
    <location>
        <begin position="437"/>
        <end position="464"/>
    </location>
</feature>
<feature type="splice variant" id="VSP_046430" description="In isoform 2." evidence="3">
    <original>VNILFLIISSVASL</original>
    <variation>WRLEVWDQGISRIGFF</variation>
    <location>
        <begin position="497"/>
        <end position="510"/>
    </location>
</feature>
<dbReference type="EC" id="3.2.1.35"/>
<dbReference type="EMBL" id="L13780">
    <property type="status" value="NOT_ANNOTATED_CDS"/>
    <property type="molecule type" value="mRNA"/>
</dbReference>
<dbReference type="EMBL" id="CM001278">
    <property type="protein sequence ID" value="EHH52472.1"/>
    <property type="molecule type" value="Genomic_DNA"/>
</dbReference>
<dbReference type="SMR" id="P38568"/>
<dbReference type="STRING" id="9541.ENSMFAP00000006823"/>
<dbReference type="CAZy" id="GH56">
    <property type="family name" value="Glycoside Hydrolase Family 56"/>
</dbReference>
<dbReference type="GlyCosmos" id="P38568">
    <property type="glycosylation" value="8 sites, No reported glycans"/>
</dbReference>
<dbReference type="eggNOG" id="ENOG502R6HD">
    <property type="taxonomic scope" value="Eukaryota"/>
</dbReference>
<dbReference type="Proteomes" id="UP000009130">
    <property type="component" value="Chromosome 3"/>
</dbReference>
<dbReference type="Proteomes" id="UP000233100">
    <property type="component" value="Unplaced"/>
</dbReference>
<dbReference type="GO" id="GO:0002079">
    <property type="term" value="C:inner acrosomal membrane"/>
    <property type="evidence" value="ECO:0000314"/>
    <property type="project" value="UniProtKB"/>
</dbReference>
<dbReference type="GO" id="GO:0005886">
    <property type="term" value="C:plasma membrane"/>
    <property type="evidence" value="ECO:0007669"/>
    <property type="project" value="UniProtKB-SubCell"/>
</dbReference>
<dbReference type="GO" id="GO:0098552">
    <property type="term" value="C:side of membrane"/>
    <property type="evidence" value="ECO:0007669"/>
    <property type="project" value="UniProtKB-KW"/>
</dbReference>
<dbReference type="GO" id="GO:0004415">
    <property type="term" value="F:hyalurononglucosaminidase activity"/>
    <property type="evidence" value="ECO:0007669"/>
    <property type="project" value="UniProtKB-EC"/>
</dbReference>
<dbReference type="GO" id="GO:0005975">
    <property type="term" value="P:carbohydrate metabolic process"/>
    <property type="evidence" value="ECO:0007669"/>
    <property type="project" value="InterPro"/>
</dbReference>
<dbReference type="GO" id="GO:0007155">
    <property type="term" value="P:cell adhesion"/>
    <property type="evidence" value="ECO:0007669"/>
    <property type="project" value="UniProtKB-KW"/>
</dbReference>
<dbReference type="GO" id="GO:0007342">
    <property type="term" value="P:fusion of sperm to egg plasma membrane involved in single fertilization"/>
    <property type="evidence" value="ECO:0007669"/>
    <property type="project" value="InterPro"/>
</dbReference>
<dbReference type="GO" id="GO:0030214">
    <property type="term" value="P:hyaluronan catabolic process"/>
    <property type="evidence" value="ECO:0007669"/>
    <property type="project" value="TreeGrafter"/>
</dbReference>
<dbReference type="GO" id="GO:0007341">
    <property type="term" value="P:penetration of zona pellucida"/>
    <property type="evidence" value="ECO:0000315"/>
    <property type="project" value="UniProtKB"/>
</dbReference>
<dbReference type="FunFam" id="3.20.20.70:FF:000065">
    <property type="entry name" value="Hyaluronidase"/>
    <property type="match status" value="1"/>
</dbReference>
<dbReference type="Gene3D" id="3.20.20.70">
    <property type="entry name" value="Aldolase class I"/>
    <property type="match status" value="1"/>
</dbReference>
<dbReference type="InterPro" id="IPR013785">
    <property type="entry name" value="Aldolase_TIM"/>
</dbReference>
<dbReference type="InterPro" id="IPR017853">
    <property type="entry name" value="Glycoside_hydrolase_SF"/>
</dbReference>
<dbReference type="InterPro" id="IPR018155">
    <property type="entry name" value="Hyaluronidase"/>
</dbReference>
<dbReference type="InterPro" id="IPR001439">
    <property type="entry name" value="Hyaluronidase_PH20/Hyal5"/>
</dbReference>
<dbReference type="PANTHER" id="PTHR11769">
    <property type="entry name" value="HYALURONIDASE"/>
    <property type="match status" value="1"/>
</dbReference>
<dbReference type="PANTHER" id="PTHR11769:SF20">
    <property type="entry name" value="HYALURONIDASE PH-20"/>
    <property type="match status" value="1"/>
</dbReference>
<dbReference type="Pfam" id="PF01630">
    <property type="entry name" value="Glyco_hydro_56"/>
    <property type="match status" value="1"/>
</dbReference>
<dbReference type="PIRSF" id="PIRSF038193">
    <property type="entry name" value="Hyaluronidase"/>
    <property type="match status" value="1"/>
</dbReference>
<dbReference type="PIRSF" id="PIRSF500773">
    <property type="entry name" value="Hyaluronidase_PH20_Hyal5"/>
    <property type="match status" value="1"/>
</dbReference>
<dbReference type="PRINTS" id="PR00846">
    <property type="entry name" value="GLHYDRLASE56"/>
</dbReference>
<dbReference type="PRINTS" id="PR00848">
    <property type="entry name" value="SPERMPH20"/>
</dbReference>
<dbReference type="SUPFAM" id="SSF51445">
    <property type="entry name" value="(Trans)glycosidases"/>
    <property type="match status" value="1"/>
</dbReference>
<organism>
    <name type="scientific">Macaca fascicularis</name>
    <name type="common">Crab-eating macaque</name>
    <name type="synonym">Cynomolgus monkey</name>
    <dbReference type="NCBI Taxonomy" id="9541"/>
    <lineage>
        <taxon>Eukaryota</taxon>
        <taxon>Metazoa</taxon>
        <taxon>Chordata</taxon>
        <taxon>Craniata</taxon>
        <taxon>Vertebrata</taxon>
        <taxon>Euteleostomi</taxon>
        <taxon>Mammalia</taxon>
        <taxon>Eutheria</taxon>
        <taxon>Euarchontoglires</taxon>
        <taxon>Primates</taxon>
        <taxon>Haplorrhini</taxon>
        <taxon>Catarrhini</taxon>
        <taxon>Cercopithecidae</taxon>
        <taxon>Cercopithecinae</taxon>
        <taxon>Macaca</taxon>
    </lineage>
</organism>
<comment type="function">
    <text>Involved in sperm-egg adhesion. Upon fertilization sperm must first penetrate a layer of cumulus cells that surrounds the egg before reaching the zona pellucida. The cumulus cells are embedded in a matrix containing hyaluronic acid which is formed prior to ovulation. This protein aids in penetrating the layer of cumulus cells by digesting hyaluronic acid.</text>
</comment>
<comment type="catalytic activity">
    <reaction>
        <text>Random hydrolysis of (1-&gt;4)-linkages between N-acetyl-beta-D-glucosamine and D-glucuronate residues in hyaluronate.</text>
        <dbReference type="EC" id="3.2.1.35"/>
    </reaction>
</comment>
<comment type="subcellular location">
    <subcellularLocation>
        <location>Cell membrane</location>
        <topology>Lipid-anchor</topology>
        <topology>GPI-anchor</topology>
    </subcellularLocation>
</comment>
<comment type="alternative products">
    <event type="alternative splicing"/>
    <isoform>
        <id>P38568-1</id>
        <name>1</name>
        <sequence type="displayed"/>
    </isoform>
    <isoform>
        <id>P38568-2</id>
        <name>2</name>
        <sequence type="described" ref="VSP_046430"/>
    </isoform>
</comment>
<comment type="tissue specificity">
    <text>Testis.</text>
</comment>
<comment type="similarity">
    <text evidence="3">Belongs to the glycosyl hydrolase 56 family.</text>
</comment>
<evidence type="ECO:0000250" key="1"/>
<evidence type="ECO:0000255" key="2"/>
<evidence type="ECO:0000305" key="3"/>
<accession>P38568</accession>
<accession>G7P0K2</accession>
<reference key="1">
    <citation type="journal article" date="1993" name="Proc. Natl. Acad. Sci. U.S.A.">
        <title>Molecular cloning of the human and monkey sperm surface protein PH-20.</title>
        <authorList>
            <person name="Lin Y."/>
            <person name="Kimmel L.H."/>
            <person name="Myles D.G."/>
            <person name="Primakoff P."/>
        </authorList>
    </citation>
    <scope>NUCLEOTIDE SEQUENCE [MRNA] (ISOFORM 1)</scope>
    <source>
        <tissue>Testis</tissue>
    </source>
</reference>
<reference key="2">
    <citation type="journal article" date="2011" name="Nat. Biotechnol.">
        <title>Genome sequencing and comparison of two nonhuman primate animal models, the cynomolgus and Chinese rhesus macaques.</title>
        <authorList>
            <person name="Yan G."/>
            <person name="Zhang G."/>
            <person name="Fang X."/>
            <person name="Zhang Y."/>
            <person name="Li C."/>
            <person name="Ling F."/>
            <person name="Cooper D.N."/>
            <person name="Li Q."/>
            <person name="Li Y."/>
            <person name="van Gool A.J."/>
            <person name="Du H."/>
            <person name="Chen J."/>
            <person name="Chen R."/>
            <person name="Zhang P."/>
            <person name="Huang Z."/>
            <person name="Thompson J.R."/>
            <person name="Meng Y."/>
            <person name="Bai Y."/>
            <person name="Wang J."/>
            <person name="Zhuo M."/>
            <person name="Wang T."/>
            <person name="Huang Y."/>
            <person name="Wei L."/>
            <person name="Li J."/>
            <person name="Wang Z."/>
            <person name="Hu H."/>
            <person name="Yang P."/>
            <person name="Le L."/>
            <person name="Stenson P.D."/>
            <person name="Li B."/>
            <person name="Liu X."/>
            <person name="Ball E.V."/>
            <person name="An N."/>
            <person name="Huang Q."/>
            <person name="Zhang Y."/>
            <person name="Fan W."/>
            <person name="Zhang X."/>
            <person name="Li Y."/>
            <person name="Wang W."/>
            <person name="Katze M.G."/>
            <person name="Su B."/>
            <person name="Nielsen R."/>
            <person name="Yang H."/>
            <person name="Wang J."/>
            <person name="Wang X."/>
            <person name="Wang J."/>
        </authorList>
    </citation>
    <scope>NUCLEOTIDE SEQUENCE [LARGE SCALE GENOMIC DNA]</scope>
</reference>
<proteinExistence type="evidence at transcript level"/>
<gene>
    <name type="primary">SPAM1</name>
    <name type="synonym">PH20</name>
    <name type="ORF">EGM_12920</name>
</gene>